<dbReference type="EC" id="2.7.2.17" evidence="1"/>
<dbReference type="EC" id="2.7.2.19" evidence="1"/>
<dbReference type="EMBL" id="BA000002">
    <property type="protein sequence ID" value="BAA80459.2"/>
    <property type="molecule type" value="Genomic_DNA"/>
</dbReference>
<dbReference type="PIR" id="E72625">
    <property type="entry name" value="E72625"/>
</dbReference>
<dbReference type="RefSeq" id="WP_010866386.1">
    <property type="nucleotide sequence ID" value="NC_000854.2"/>
</dbReference>
<dbReference type="SMR" id="Q9YBY9"/>
<dbReference type="STRING" id="272557.APE_1461.1"/>
<dbReference type="EnsemblBacteria" id="BAA80459">
    <property type="protein sequence ID" value="BAA80459"/>
    <property type="gene ID" value="APE_1461.1"/>
</dbReference>
<dbReference type="GeneID" id="1446030"/>
<dbReference type="KEGG" id="ape:APE_1461.1"/>
<dbReference type="eggNOG" id="arCOG00862">
    <property type="taxonomic scope" value="Archaea"/>
</dbReference>
<dbReference type="UniPathway" id="UPA00033">
    <property type="reaction ID" value="UER00036"/>
</dbReference>
<dbReference type="UniPathway" id="UPA00068"/>
<dbReference type="Proteomes" id="UP000002518">
    <property type="component" value="Chromosome"/>
</dbReference>
<dbReference type="GO" id="GO:0005737">
    <property type="term" value="C:cytoplasm"/>
    <property type="evidence" value="ECO:0007669"/>
    <property type="project" value="UniProtKB-SubCell"/>
</dbReference>
<dbReference type="GO" id="GO:0003991">
    <property type="term" value="F:acetylglutamate kinase activity"/>
    <property type="evidence" value="ECO:0007669"/>
    <property type="project" value="TreeGrafter"/>
</dbReference>
<dbReference type="GO" id="GO:0005524">
    <property type="term" value="F:ATP binding"/>
    <property type="evidence" value="ECO:0007669"/>
    <property type="project" value="UniProtKB-KW"/>
</dbReference>
<dbReference type="GO" id="GO:0043744">
    <property type="term" value="F:N2-acetyl-L-aminoadipate kinase activity"/>
    <property type="evidence" value="ECO:0007669"/>
    <property type="project" value="RHEA"/>
</dbReference>
<dbReference type="GO" id="GO:0042450">
    <property type="term" value="P:arginine biosynthetic process via ornithine"/>
    <property type="evidence" value="ECO:0007669"/>
    <property type="project" value="UniProtKB-UniRule"/>
</dbReference>
<dbReference type="GO" id="GO:0006526">
    <property type="term" value="P:L-arginine biosynthetic process"/>
    <property type="evidence" value="ECO:0007669"/>
    <property type="project" value="UniProtKB-UniPathway"/>
</dbReference>
<dbReference type="GO" id="GO:0019878">
    <property type="term" value="P:lysine biosynthetic process via aminoadipic acid"/>
    <property type="evidence" value="ECO:0007669"/>
    <property type="project" value="UniProtKB-UniRule"/>
</dbReference>
<dbReference type="Gene3D" id="3.40.1160.10">
    <property type="entry name" value="Acetylglutamate kinase-like"/>
    <property type="match status" value="1"/>
</dbReference>
<dbReference type="HAMAP" id="MF_02082">
    <property type="entry name" value="LysZ"/>
    <property type="match status" value="1"/>
</dbReference>
<dbReference type="InterPro" id="IPR036393">
    <property type="entry name" value="AceGlu_kinase-like_sf"/>
</dbReference>
<dbReference type="InterPro" id="IPR004662">
    <property type="entry name" value="AcgluKinase_fam"/>
</dbReference>
<dbReference type="InterPro" id="IPR001048">
    <property type="entry name" value="Asp/Glu/Uridylate_kinase"/>
</dbReference>
<dbReference type="InterPro" id="IPR037529">
    <property type="entry name" value="LysZ"/>
</dbReference>
<dbReference type="NCBIfam" id="TIGR00761">
    <property type="entry name" value="argB"/>
    <property type="match status" value="1"/>
</dbReference>
<dbReference type="NCBIfam" id="NF010662">
    <property type="entry name" value="PRK14058.1-4"/>
    <property type="match status" value="1"/>
</dbReference>
<dbReference type="PANTHER" id="PTHR23342">
    <property type="entry name" value="N-ACETYLGLUTAMATE SYNTHASE"/>
    <property type="match status" value="1"/>
</dbReference>
<dbReference type="PANTHER" id="PTHR23342:SF0">
    <property type="entry name" value="N-ACETYLGLUTAMATE SYNTHASE, MITOCHONDRIAL"/>
    <property type="match status" value="1"/>
</dbReference>
<dbReference type="Pfam" id="PF00696">
    <property type="entry name" value="AA_kinase"/>
    <property type="match status" value="1"/>
</dbReference>
<dbReference type="PIRSF" id="PIRSF000728">
    <property type="entry name" value="NAGK"/>
    <property type="match status" value="1"/>
</dbReference>
<dbReference type="SUPFAM" id="SSF53633">
    <property type="entry name" value="Carbamate kinase-like"/>
    <property type="match status" value="1"/>
</dbReference>
<organism>
    <name type="scientific">Aeropyrum pernix (strain ATCC 700893 / DSM 11879 / JCM 9820 / NBRC 100138 / K1)</name>
    <dbReference type="NCBI Taxonomy" id="272557"/>
    <lineage>
        <taxon>Archaea</taxon>
        <taxon>Thermoproteota</taxon>
        <taxon>Thermoprotei</taxon>
        <taxon>Desulfurococcales</taxon>
        <taxon>Desulfurococcaceae</taxon>
        <taxon>Aeropyrum</taxon>
    </lineage>
</organism>
<feature type="chain" id="PRO_0000112691" description="Putative [LysW]-aminoadipate/[LysW]-glutamate kinase">
    <location>
        <begin position="1"/>
        <end position="270"/>
    </location>
</feature>
<feature type="binding site" evidence="1">
    <location>
        <begin position="42"/>
        <end position="43"/>
    </location>
    <ligand>
        <name>substrate</name>
    </ligand>
</feature>
<feature type="binding site" evidence="1">
    <location>
        <position position="69"/>
    </location>
    <ligand>
        <name>substrate</name>
    </ligand>
</feature>
<feature type="binding site" evidence="1">
    <location>
        <position position="177"/>
    </location>
    <ligand>
        <name>substrate</name>
    </ligand>
</feature>
<feature type="site" description="Transition state stabilizer" evidence="1">
    <location>
        <position position="10"/>
    </location>
</feature>
<feature type="site" description="Transition state stabilizer" evidence="1">
    <location>
        <position position="233"/>
    </location>
</feature>
<reference key="1">
    <citation type="journal article" date="1999" name="DNA Res.">
        <title>Complete genome sequence of an aerobic hyper-thermophilic crenarchaeon, Aeropyrum pernix K1.</title>
        <authorList>
            <person name="Kawarabayasi Y."/>
            <person name="Hino Y."/>
            <person name="Horikawa H."/>
            <person name="Yamazaki S."/>
            <person name="Haikawa Y."/>
            <person name="Jin-no K."/>
            <person name="Takahashi M."/>
            <person name="Sekine M."/>
            <person name="Baba S."/>
            <person name="Ankai A."/>
            <person name="Kosugi H."/>
            <person name="Hosoyama A."/>
            <person name="Fukui S."/>
            <person name="Nagai Y."/>
            <person name="Nishijima K."/>
            <person name="Nakazawa H."/>
            <person name="Takamiya M."/>
            <person name="Masuda S."/>
            <person name="Funahashi T."/>
            <person name="Tanaka T."/>
            <person name="Kudoh Y."/>
            <person name="Yamazaki J."/>
            <person name="Kushida N."/>
            <person name="Oguchi A."/>
            <person name="Aoki K."/>
            <person name="Kubota K."/>
            <person name="Nakamura Y."/>
            <person name="Nomura N."/>
            <person name="Sako Y."/>
            <person name="Kikuchi H."/>
        </authorList>
    </citation>
    <scope>NUCLEOTIDE SEQUENCE [LARGE SCALE GENOMIC DNA]</scope>
    <source>
        <strain>ATCC 700893 / DSM 11879 / JCM 9820 / NBRC 100138 / K1</strain>
    </source>
</reference>
<proteinExistence type="inferred from homology"/>
<evidence type="ECO:0000255" key="1">
    <source>
        <dbReference type="HAMAP-Rule" id="MF_02082"/>
    </source>
</evidence>
<keyword id="KW-0028">Amino-acid biosynthesis</keyword>
<keyword id="KW-0055">Arginine biosynthesis</keyword>
<keyword id="KW-0067">ATP-binding</keyword>
<keyword id="KW-0963">Cytoplasm</keyword>
<keyword id="KW-0418">Kinase</keyword>
<keyword id="KW-0457">Lysine biosynthesis</keyword>
<keyword id="KW-0547">Nucleotide-binding</keyword>
<keyword id="KW-1185">Reference proteome</keyword>
<keyword id="KW-0808">Transferase</keyword>
<protein>
    <recommendedName>
        <fullName evidence="1">Putative [LysW]-aminoadipate/[LysW]-glutamate kinase</fullName>
        <ecNumber evidence="1">2.7.2.17</ecNumber>
        <ecNumber evidence="1">2.7.2.19</ecNumber>
    </recommendedName>
</protein>
<gene>
    <name evidence="1" type="primary">lysZ</name>
    <name type="ordered locus">APE_1461.1</name>
</gene>
<comment type="function">
    <text evidence="1">Involved in both the arginine and lysine biosynthetic pathways. Phosphorylates the LysW-bound precursors glutamate (for arginine biosynthesis), respectively alpha-aminoadipate (for lysine biosynthesis).</text>
</comment>
<comment type="catalytic activity">
    <reaction evidence="1">
        <text>[amino-group carrier protein]-C-terminal-N-(1,4-dicarboxybutan-1-yl)-L-glutamine + ATP = [amino-group carrier protein]-C-terminal-N-(1-carboxy-5-phosphooxy-5-oxopentan-1-yl)-L-glutamine + ADP</text>
        <dbReference type="Rhea" id="RHEA:41944"/>
        <dbReference type="Rhea" id="RHEA-COMP:9694"/>
        <dbReference type="Rhea" id="RHEA-COMP:9712"/>
        <dbReference type="ChEBI" id="CHEBI:30616"/>
        <dbReference type="ChEBI" id="CHEBI:78499"/>
        <dbReference type="ChEBI" id="CHEBI:78503"/>
        <dbReference type="ChEBI" id="CHEBI:456216"/>
        <dbReference type="EC" id="2.7.2.17"/>
    </reaction>
</comment>
<comment type="catalytic activity">
    <reaction evidence="1">
        <text>[amino-group carrier protein]-C-terminal-gamma-(L-glutamyl)-L-glutamate + ATP = [amino-group carrier protein]-C-terminal-gamma-(5-phospho-L-glutamyl)-L-glutamate + ADP</text>
        <dbReference type="Rhea" id="RHEA:52632"/>
        <dbReference type="Rhea" id="RHEA-COMP:13311"/>
        <dbReference type="Rhea" id="RHEA-COMP:13313"/>
        <dbReference type="ChEBI" id="CHEBI:30616"/>
        <dbReference type="ChEBI" id="CHEBI:136714"/>
        <dbReference type="ChEBI" id="CHEBI:136717"/>
        <dbReference type="ChEBI" id="CHEBI:456216"/>
        <dbReference type="EC" id="2.7.2.19"/>
    </reaction>
</comment>
<comment type="pathway">
    <text evidence="1">Amino-acid biosynthesis; L-lysine biosynthesis via AAA pathway; L-lysine from L-alpha-aminoadipate (Thermus route): step 2/5.</text>
</comment>
<comment type="pathway">
    <text evidence="1">Amino-acid biosynthesis; L-arginine biosynthesis.</text>
</comment>
<comment type="subcellular location">
    <subcellularLocation>
        <location evidence="1">Cytoplasm</location>
    </subcellularLocation>
</comment>
<comment type="similarity">
    <text evidence="1">Belongs to the acetylglutamate kinase family. LysZ subfamily.</text>
</comment>
<accession>Q9YBY9</accession>
<name>LYSZ_AERPE</name>
<sequence>MARYGVAVVKIGGSIASRLERVADEIAVLAREGLRLVVVHGGGKVVDEYSRRMGVEPRYVLHPSGVRSRYTSWEELEVYVMVMAGLLATSISSELASRGLKVLSLTGLDGLSVEARRRERIVIVNERGRPQAIPGGYTGKIERVDSMFVGSMLQQVDVILYSPVAYGREGDRVVALNVDGDQMAASLSAALKAPLALVTDVPGVILDGRVVDRIRVSEAREIAAKAGVGMNRKILMAAKAVSEGSPYAAIGDPPIQSLINGEKGTLVTRS</sequence>